<protein>
    <recommendedName>
        <fullName evidence="1">FMN-dependent NADH:quinone oxidoreductase</fullName>
        <ecNumber evidence="1">1.6.5.-</ecNumber>
    </recommendedName>
    <alternativeName>
        <fullName evidence="1">Azo-dye reductase</fullName>
    </alternativeName>
    <alternativeName>
        <fullName evidence="1">FMN-dependent NADH-azo compound oxidoreductase</fullName>
    </alternativeName>
    <alternativeName>
        <fullName evidence="1">FMN-dependent NADH-azoreductase</fullName>
        <ecNumber evidence="1">1.7.1.17</ecNumber>
    </alternativeName>
</protein>
<sequence length="201" mass="21628">MSKVLVLKSSILAGYSQSGQLTDYFIEQWREKHVADEITVRDLAANPVPVLDGELVGAMRPGDAPLTPRQQDALALSDELIAELKAHDVIVIAAPMYNFNIPTQLKNYFDLIARAGITFRYTEKGPEGLVTGKRAVVLSSRGGIHKDTPTDLIAPYLKVFLGFIGITDVNFVFAEGIAYGPEVAAKAQADAKAAIDSVVAA</sequence>
<organism>
    <name type="scientific">Salmonella paratyphi B (strain ATCC BAA-1250 / SPB7)</name>
    <dbReference type="NCBI Taxonomy" id="1016998"/>
    <lineage>
        <taxon>Bacteria</taxon>
        <taxon>Pseudomonadati</taxon>
        <taxon>Pseudomonadota</taxon>
        <taxon>Gammaproteobacteria</taxon>
        <taxon>Enterobacterales</taxon>
        <taxon>Enterobacteriaceae</taxon>
        <taxon>Salmonella</taxon>
    </lineage>
</organism>
<feature type="chain" id="PRO_1000085586" description="FMN-dependent NADH:quinone oxidoreductase">
    <location>
        <begin position="1"/>
        <end position="201"/>
    </location>
</feature>
<feature type="binding site" evidence="1">
    <location>
        <position position="10"/>
    </location>
    <ligand>
        <name>FMN</name>
        <dbReference type="ChEBI" id="CHEBI:58210"/>
    </ligand>
</feature>
<feature type="binding site" evidence="1">
    <location>
        <begin position="16"/>
        <end position="18"/>
    </location>
    <ligand>
        <name>FMN</name>
        <dbReference type="ChEBI" id="CHEBI:58210"/>
    </ligand>
</feature>
<feature type="binding site" evidence="1">
    <location>
        <begin position="96"/>
        <end position="99"/>
    </location>
    <ligand>
        <name>FMN</name>
        <dbReference type="ChEBI" id="CHEBI:58210"/>
    </ligand>
</feature>
<feature type="binding site" evidence="1">
    <location>
        <begin position="140"/>
        <end position="143"/>
    </location>
    <ligand>
        <name>FMN</name>
        <dbReference type="ChEBI" id="CHEBI:58210"/>
    </ligand>
</feature>
<gene>
    <name evidence="1" type="primary">azoR</name>
    <name type="ordered locus">SPAB_01630</name>
</gene>
<accession>A9MXQ2</accession>
<dbReference type="EC" id="1.6.5.-" evidence="1"/>
<dbReference type="EC" id="1.7.1.17" evidence="1"/>
<dbReference type="EMBL" id="CP000886">
    <property type="protein sequence ID" value="ABX67025.1"/>
    <property type="molecule type" value="Genomic_DNA"/>
</dbReference>
<dbReference type="RefSeq" id="WP_000048924.1">
    <property type="nucleotide sequence ID" value="NC_010102.1"/>
</dbReference>
<dbReference type="SMR" id="A9MXQ2"/>
<dbReference type="KEGG" id="spq:SPAB_01630"/>
<dbReference type="PATRIC" id="fig|1016998.12.peg.1534"/>
<dbReference type="HOGENOM" id="CLU_088964_0_0_6"/>
<dbReference type="BioCyc" id="SENT1016998:SPAB_RS06635-MONOMER"/>
<dbReference type="Proteomes" id="UP000008556">
    <property type="component" value="Chromosome"/>
</dbReference>
<dbReference type="GO" id="GO:0009055">
    <property type="term" value="F:electron transfer activity"/>
    <property type="evidence" value="ECO:0007669"/>
    <property type="project" value="UniProtKB-UniRule"/>
</dbReference>
<dbReference type="GO" id="GO:0010181">
    <property type="term" value="F:FMN binding"/>
    <property type="evidence" value="ECO:0007669"/>
    <property type="project" value="UniProtKB-UniRule"/>
</dbReference>
<dbReference type="GO" id="GO:0016652">
    <property type="term" value="F:oxidoreductase activity, acting on NAD(P)H as acceptor"/>
    <property type="evidence" value="ECO:0007669"/>
    <property type="project" value="UniProtKB-UniRule"/>
</dbReference>
<dbReference type="GO" id="GO:0016655">
    <property type="term" value="F:oxidoreductase activity, acting on NAD(P)H, quinone or similar compound as acceptor"/>
    <property type="evidence" value="ECO:0007669"/>
    <property type="project" value="InterPro"/>
</dbReference>
<dbReference type="FunFam" id="3.40.50.360:FF:000010">
    <property type="entry name" value="FMN-dependent NADH-azoreductase"/>
    <property type="match status" value="1"/>
</dbReference>
<dbReference type="Gene3D" id="3.40.50.360">
    <property type="match status" value="1"/>
</dbReference>
<dbReference type="HAMAP" id="MF_01216">
    <property type="entry name" value="Azoreductase_type1"/>
    <property type="match status" value="1"/>
</dbReference>
<dbReference type="InterPro" id="IPR003680">
    <property type="entry name" value="Flavodoxin_fold"/>
</dbReference>
<dbReference type="InterPro" id="IPR029039">
    <property type="entry name" value="Flavoprotein-like_sf"/>
</dbReference>
<dbReference type="InterPro" id="IPR050104">
    <property type="entry name" value="FMN-dep_NADH:Q_OxRdtase_AzoR1"/>
</dbReference>
<dbReference type="InterPro" id="IPR023048">
    <property type="entry name" value="NADH:quinone_OxRdtase_FMN_depd"/>
</dbReference>
<dbReference type="PANTHER" id="PTHR43741">
    <property type="entry name" value="FMN-DEPENDENT NADH-AZOREDUCTASE 1"/>
    <property type="match status" value="1"/>
</dbReference>
<dbReference type="PANTHER" id="PTHR43741:SF2">
    <property type="entry name" value="FMN-DEPENDENT NADH:QUINONE OXIDOREDUCTASE"/>
    <property type="match status" value="1"/>
</dbReference>
<dbReference type="Pfam" id="PF02525">
    <property type="entry name" value="Flavodoxin_2"/>
    <property type="match status" value="1"/>
</dbReference>
<dbReference type="SUPFAM" id="SSF52218">
    <property type="entry name" value="Flavoproteins"/>
    <property type="match status" value="1"/>
</dbReference>
<keyword id="KW-0285">Flavoprotein</keyword>
<keyword id="KW-0288">FMN</keyword>
<keyword id="KW-0520">NAD</keyword>
<keyword id="KW-0560">Oxidoreductase</keyword>
<comment type="function">
    <text evidence="1">Quinone reductase that provides resistance to thiol-specific stress caused by electrophilic quinones.</text>
</comment>
<comment type="function">
    <text evidence="1">Also exhibits azoreductase activity. Catalyzes the reductive cleavage of the azo bond in aromatic azo compounds to the corresponding amines.</text>
</comment>
<comment type="catalytic activity">
    <reaction evidence="1">
        <text>2 a quinone + NADH + H(+) = 2 a 1,4-benzosemiquinone + NAD(+)</text>
        <dbReference type="Rhea" id="RHEA:65952"/>
        <dbReference type="ChEBI" id="CHEBI:15378"/>
        <dbReference type="ChEBI" id="CHEBI:57540"/>
        <dbReference type="ChEBI" id="CHEBI:57945"/>
        <dbReference type="ChEBI" id="CHEBI:132124"/>
        <dbReference type="ChEBI" id="CHEBI:134225"/>
    </reaction>
</comment>
<comment type="catalytic activity">
    <reaction evidence="1">
        <text>N,N-dimethyl-1,4-phenylenediamine + anthranilate + 2 NAD(+) = 2-(4-dimethylaminophenyl)diazenylbenzoate + 2 NADH + 2 H(+)</text>
        <dbReference type="Rhea" id="RHEA:55872"/>
        <dbReference type="ChEBI" id="CHEBI:15378"/>
        <dbReference type="ChEBI" id="CHEBI:15783"/>
        <dbReference type="ChEBI" id="CHEBI:16567"/>
        <dbReference type="ChEBI" id="CHEBI:57540"/>
        <dbReference type="ChEBI" id="CHEBI:57945"/>
        <dbReference type="ChEBI" id="CHEBI:71579"/>
        <dbReference type="EC" id="1.7.1.17"/>
    </reaction>
</comment>
<comment type="cofactor">
    <cofactor evidence="1">
        <name>FMN</name>
        <dbReference type="ChEBI" id="CHEBI:58210"/>
    </cofactor>
    <text evidence="1">Binds 1 FMN per subunit.</text>
</comment>
<comment type="subunit">
    <text evidence="1">Homodimer.</text>
</comment>
<comment type="similarity">
    <text evidence="1">Belongs to the azoreductase type 1 family.</text>
</comment>
<evidence type="ECO:0000255" key="1">
    <source>
        <dbReference type="HAMAP-Rule" id="MF_01216"/>
    </source>
</evidence>
<proteinExistence type="inferred from homology"/>
<reference key="1">
    <citation type="submission" date="2007-11" db="EMBL/GenBank/DDBJ databases">
        <authorList>
            <consortium name="The Salmonella enterica serovar Paratyphi B Genome Sequencing Project"/>
            <person name="McClelland M."/>
            <person name="Sanderson E.K."/>
            <person name="Porwollik S."/>
            <person name="Spieth J."/>
            <person name="Clifton W.S."/>
            <person name="Fulton R."/>
            <person name="Cordes M."/>
            <person name="Wollam A."/>
            <person name="Shah N."/>
            <person name="Pepin K."/>
            <person name="Bhonagiri V."/>
            <person name="Nash W."/>
            <person name="Johnson M."/>
            <person name="Thiruvilangam P."/>
            <person name="Wilson R."/>
        </authorList>
    </citation>
    <scope>NUCLEOTIDE SEQUENCE [LARGE SCALE GENOMIC DNA]</scope>
    <source>
        <strain>ATCC BAA-1250 / SPB7</strain>
    </source>
</reference>
<name>AZOR_SALPB</name>